<name>PEP_ARATH</name>
<feature type="chain" id="PRO_0000432399" description="RNA-binding KH domain-containing protein PEPPER">
    <location>
        <begin position="1"/>
        <end position="495"/>
    </location>
</feature>
<feature type="domain" description="KH 1" evidence="1">
    <location>
        <begin position="73"/>
        <end position="140"/>
    </location>
</feature>
<feature type="domain" description="KH 2" evidence="1">
    <location>
        <begin position="165"/>
        <end position="234"/>
    </location>
</feature>
<feature type="domain" description="KH 3" evidence="1">
    <location>
        <begin position="340"/>
        <end position="403"/>
    </location>
</feature>
<feature type="region of interest" description="Disordered" evidence="2">
    <location>
        <begin position="474"/>
        <end position="495"/>
    </location>
</feature>
<gene>
    <name evidence="6" type="primary">PEP</name>
    <name evidence="7" type="ordered locus">At4g26000</name>
    <name evidence="8" type="ORF">F20B18.110</name>
</gene>
<reference key="1">
    <citation type="journal article" date="1999" name="Nature">
        <title>Sequence and analysis of chromosome 4 of the plant Arabidopsis thaliana.</title>
        <authorList>
            <person name="Mayer K.F.X."/>
            <person name="Schueller C."/>
            <person name="Wambutt R."/>
            <person name="Murphy G."/>
            <person name="Volckaert G."/>
            <person name="Pohl T."/>
            <person name="Duesterhoeft A."/>
            <person name="Stiekema W."/>
            <person name="Entian K.-D."/>
            <person name="Terryn N."/>
            <person name="Harris B."/>
            <person name="Ansorge W."/>
            <person name="Brandt P."/>
            <person name="Grivell L.A."/>
            <person name="Rieger M."/>
            <person name="Weichselgartner M."/>
            <person name="de Simone V."/>
            <person name="Obermaier B."/>
            <person name="Mache R."/>
            <person name="Mueller M."/>
            <person name="Kreis M."/>
            <person name="Delseny M."/>
            <person name="Puigdomenech P."/>
            <person name="Watson M."/>
            <person name="Schmidtheini T."/>
            <person name="Reichert B."/>
            <person name="Portetelle D."/>
            <person name="Perez-Alonso M."/>
            <person name="Boutry M."/>
            <person name="Bancroft I."/>
            <person name="Vos P."/>
            <person name="Hoheisel J."/>
            <person name="Zimmermann W."/>
            <person name="Wedler H."/>
            <person name="Ridley P."/>
            <person name="Langham S.-A."/>
            <person name="McCullagh B."/>
            <person name="Bilham L."/>
            <person name="Robben J."/>
            <person name="van der Schueren J."/>
            <person name="Grymonprez B."/>
            <person name="Chuang Y.-J."/>
            <person name="Vandenbussche F."/>
            <person name="Braeken M."/>
            <person name="Weltjens I."/>
            <person name="Voet M."/>
            <person name="Bastiaens I."/>
            <person name="Aert R."/>
            <person name="Defoor E."/>
            <person name="Weitzenegger T."/>
            <person name="Bothe G."/>
            <person name="Ramsperger U."/>
            <person name="Hilbert H."/>
            <person name="Braun M."/>
            <person name="Holzer E."/>
            <person name="Brandt A."/>
            <person name="Peters S."/>
            <person name="van Staveren M."/>
            <person name="Dirkse W."/>
            <person name="Mooijman P."/>
            <person name="Klein Lankhorst R."/>
            <person name="Rose M."/>
            <person name="Hauf J."/>
            <person name="Koetter P."/>
            <person name="Berneiser S."/>
            <person name="Hempel S."/>
            <person name="Feldpausch M."/>
            <person name="Lamberth S."/>
            <person name="Van den Daele H."/>
            <person name="De Keyser A."/>
            <person name="Buysshaert C."/>
            <person name="Gielen J."/>
            <person name="Villarroel R."/>
            <person name="De Clercq R."/>
            <person name="van Montagu M."/>
            <person name="Rogers J."/>
            <person name="Cronin A."/>
            <person name="Quail M.A."/>
            <person name="Bray-Allen S."/>
            <person name="Clark L."/>
            <person name="Doggett J."/>
            <person name="Hall S."/>
            <person name="Kay M."/>
            <person name="Lennard N."/>
            <person name="McLay K."/>
            <person name="Mayes R."/>
            <person name="Pettett A."/>
            <person name="Rajandream M.A."/>
            <person name="Lyne M."/>
            <person name="Benes V."/>
            <person name="Rechmann S."/>
            <person name="Borkova D."/>
            <person name="Bloecker H."/>
            <person name="Scharfe M."/>
            <person name="Grimm M."/>
            <person name="Loehnert T.-H."/>
            <person name="Dose S."/>
            <person name="de Haan M."/>
            <person name="Maarse A.C."/>
            <person name="Schaefer M."/>
            <person name="Mueller-Auer S."/>
            <person name="Gabel C."/>
            <person name="Fuchs M."/>
            <person name="Fartmann B."/>
            <person name="Granderath K."/>
            <person name="Dauner D."/>
            <person name="Herzl A."/>
            <person name="Neumann S."/>
            <person name="Argiriou A."/>
            <person name="Vitale D."/>
            <person name="Liguori R."/>
            <person name="Piravandi E."/>
            <person name="Massenet O."/>
            <person name="Quigley F."/>
            <person name="Clabauld G."/>
            <person name="Muendlein A."/>
            <person name="Felber R."/>
            <person name="Schnabl S."/>
            <person name="Hiller R."/>
            <person name="Schmidt W."/>
            <person name="Lecharny A."/>
            <person name="Aubourg S."/>
            <person name="Chefdor F."/>
            <person name="Cooke R."/>
            <person name="Berger C."/>
            <person name="Monfort A."/>
            <person name="Casacuberta E."/>
            <person name="Gibbons T."/>
            <person name="Weber N."/>
            <person name="Vandenbol M."/>
            <person name="Bargues M."/>
            <person name="Terol J."/>
            <person name="Torres A."/>
            <person name="Perez-Perez A."/>
            <person name="Purnelle B."/>
            <person name="Bent E."/>
            <person name="Johnson S."/>
            <person name="Tacon D."/>
            <person name="Jesse T."/>
            <person name="Heijnen L."/>
            <person name="Schwarz S."/>
            <person name="Scholler P."/>
            <person name="Heber S."/>
            <person name="Francs P."/>
            <person name="Bielke C."/>
            <person name="Frishman D."/>
            <person name="Haase D."/>
            <person name="Lemcke K."/>
            <person name="Mewes H.-W."/>
            <person name="Stocker S."/>
            <person name="Zaccaria P."/>
            <person name="Bevan M."/>
            <person name="Wilson R.K."/>
            <person name="de la Bastide M."/>
            <person name="Habermann K."/>
            <person name="Parnell L."/>
            <person name="Dedhia N."/>
            <person name="Gnoj L."/>
            <person name="Schutz K."/>
            <person name="Huang E."/>
            <person name="Spiegel L."/>
            <person name="Sekhon M."/>
            <person name="Murray J."/>
            <person name="Sheet P."/>
            <person name="Cordes M."/>
            <person name="Abu-Threideh J."/>
            <person name="Stoneking T."/>
            <person name="Kalicki J."/>
            <person name="Graves T."/>
            <person name="Harmon G."/>
            <person name="Edwards J."/>
            <person name="Latreille P."/>
            <person name="Courtney L."/>
            <person name="Cloud J."/>
            <person name="Abbott A."/>
            <person name="Scott K."/>
            <person name="Johnson D."/>
            <person name="Minx P."/>
            <person name="Bentley D."/>
            <person name="Fulton B."/>
            <person name="Miller N."/>
            <person name="Greco T."/>
            <person name="Kemp K."/>
            <person name="Kramer J."/>
            <person name="Fulton L."/>
            <person name="Mardis E."/>
            <person name="Dante M."/>
            <person name="Pepin K."/>
            <person name="Hillier L.W."/>
            <person name="Nelson J."/>
            <person name="Spieth J."/>
            <person name="Ryan E."/>
            <person name="Andrews S."/>
            <person name="Geisel C."/>
            <person name="Layman D."/>
            <person name="Du H."/>
            <person name="Ali J."/>
            <person name="Berghoff A."/>
            <person name="Jones K."/>
            <person name="Drone K."/>
            <person name="Cotton M."/>
            <person name="Joshu C."/>
            <person name="Antonoiu B."/>
            <person name="Zidanic M."/>
            <person name="Strong C."/>
            <person name="Sun H."/>
            <person name="Lamar B."/>
            <person name="Yordan C."/>
            <person name="Ma P."/>
            <person name="Zhong J."/>
            <person name="Preston R."/>
            <person name="Vil D."/>
            <person name="Shekher M."/>
            <person name="Matero A."/>
            <person name="Shah R."/>
            <person name="Swaby I.K."/>
            <person name="O'Shaughnessy A."/>
            <person name="Rodriguez M."/>
            <person name="Hoffman J."/>
            <person name="Till S."/>
            <person name="Granat S."/>
            <person name="Shohdy N."/>
            <person name="Hasegawa A."/>
            <person name="Hameed A."/>
            <person name="Lodhi M."/>
            <person name="Johnson A."/>
            <person name="Chen E."/>
            <person name="Marra M.A."/>
            <person name="Martienssen R."/>
            <person name="McCombie W.R."/>
        </authorList>
    </citation>
    <scope>NUCLEOTIDE SEQUENCE [LARGE SCALE GENOMIC DNA]</scope>
    <source>
        <strain>cv. Columbia</strain>
    </source>
</reference>
<reference key="2">
    <citation type="journal article" date="2017" name="Plant J.">
        <title>Araport11: a complete reannotation of the Arabidopsis thaliana reference genome.</title>
        <authorList>
            <person name="Cheng C.Y."/>
            <person name="Krishnakumar V."/>
            <person name="Chan A.P."/>
            <person name="Thibaud-Nissen F."/>
            <person name="Schobel S."/>
            <person name="Town C.D."/>
        </authorList>
    </citation>
    <scope>GENOME REANNOTATION</scope>
    <source>
        <strain>cv. Columbia</strain>
    </source>
</reference>
<reference key="3">
    <citation type="journal article" date="2003" name="Science">
        <title>Empirical analysis of transcriptional activity in the Arabidopsis genome.</title>
        <authorList>
            <person name="Yamada K."/>
            <person name="Lim J."/>
            <person name="Dale J.M."/>
            <person name="Chen H."/>
            <person name="Shinn P."/>
            <person name="Palm C.J."/>
            <person name="Southwick A.M."/>
            <person name="Wu H.C."/>
            <person name="Kim C.J."/>
            <person name="Nguyen M."/>
            <person name="Pham P.K."/>
            <person name="Cheuk R.F."/>
            <person name="Karlin-Newmann G."/>
            <person name="Liu S.X."/>
            <person name="Lam B."/>
            <person name="Sakano H."/>
            <person name="Wu T."/>
            <person name="Yu G."/>
            <person name="Miranda M."/>
            <person name="Quach H.L."/>
            <person name="Tripp M."/>
            <person name="Chang C.H."/>
            <person name="Lee J.M."/>
            <person name="Toriumi M.J."/>
            <person name="Chan M.M."/>
            <person name="Tang C.C."/>
            <person name="Onodera C.S."/>
            <person name="Deng J.M."/>
            <person name="Akiyama K."/>
            <person name="Ansari Y."/>
            <person name="Arakawa T."/>
            <person name="Banh J."/>
            <person name="Banno F."/>
            <person name="Bowser L."/>
            <person name="Brooks S.Y."/>
            <person name="Carninci P."/>
            <person name="Chao Q."/>
            <person name="Choy N."/>
            <person name="Enju A."/>
            <person name="Goldsmith A.D."/>
            <person name="Gurjal M."/>
            <person name="Hansen N.F."/>
            <person name="Hayashizaki Y."/>
            <person name="Johnson-Hopson C."/>
            <person name="Hsuan V.W."/>
            <person name="Iida K."/>
            <person name="Karnes M."/>
            <person name="Khan S."/>
            <person name="Koesema E."/>
            <person name="Ishida J."/>
            <person name="Jiang P.X."/>
            <person name="Jones T."/>
            <person name="Kawai J."/>
            <person name="Kamiya A."/>
            <person name="Meyers C."/>
            <person name="Nakajima M."/>
            <person name="Narusaka M."/>
            <person name="Seki M."/>
            <person name="Sakurai T."/>
            <person name="Satou M."/>
            <person name="Tamse R."/>
            <person name="Vaysberg M."/>
            <person name="Wallender E.K."/>
            <person name="Wong C."/>
            <person name="Yamamura Y."/>
            <person name="Yuan S."/>
            <person name="Shinozaki K."/>
            <person name="Davis R.W."/>
            <person name="Theologis A."/>
            <person name="Ecker J.R."/>
        </authorList>
    </citation>
    <scope>NUCLEOTIDE SEQUENCE [LARGE SCALE MRNA]</scope>
    <source>
        <strain>cv. Columbia</strain>
    </source>
</reference>
<reference key="4">
    <citation type="journal article" date="2006" name="Dev. Biol.">
        <title>PEPPER, a novel K-homology domain gene, regulates vegetative and gynoecium development in Arabidopsis.</title>
        <authorList>
            <person name="Ripoll J.J."/>
            <person name="Ferrandiz C."/>
            <person name="Martinez-Laborda A."/>
            <person name="Vera A."/>
        </authorList>
    </citation>
    <scope>FUNCTION</scope>
    <scope>DISRUPTION PHENOTYPE</scope>
    <scope>TISSUE SPECIFICITY</scope>
    <scope>DEVELOPMENTAL STAGE</scope>
    <source>
        <strain>cv. Columbia</strain>
        <strain>cv. Wassilewskija-2</strain>
    </source>
</reference>
<reference key="5">
    <citation type="journal article" date="2009" name="Dev. Biol.">
        <title>Antagonistic interactions between Arabidopsis K-homology domain genes uncover PEPPER as a positive regulator of the central floral repressor FLOWERING LOCUS C.</title>
        <authorList>
            <person name="Ripoll J.J."/>
            <person name="Rodriguez-Cazorla E."/>
            <person name="Gonzalez-Reig S."/>
            <person name="Andujar A."/>
            <person name="Alonso-Cantabrana H."/>
            <person name="Perez-Amador M.A."/>
            <person name="Carbonell J."/>
            <person name="Martinez-Laborda A."/>
            <person name="Vera A."/>
        </authorList>
    </citation>
    <scope>FUNCTION</scope>
    <scope>DISRUPTION PHENOTYPE</scope>
    <scope>SUBCELLULAR LOCATION</scope>
    <source>
        <strain>cv. Columbia</strain>
    </source>
</reference>
<reference key="6">
    <citation type="journal article" date="2015" name="PLoS Genet.">
        <title>K-homology nuclear ribonucleoproteins regulate floral organ identity and determinacy in arabidopsis.</title>
        <authorList>
            <person name="Rodriguez-Cazorla E."/>
            <person name="Ripoll J.J."/>
            <person name="Andujar A."/>
            <person name="Bailey L.J."/>
            <person name="Martinez-Laborda A."/>
            <person name="Yanofsky M.F."/>
            <person name="Vera A."/>
        </authorList>
    </citation>
    <scope>INTERACTION WITH HUA1 AND HEN4</scope>
</reference>
<accession>Q9SZH4</accession>
<keyword id="KW-0539">Nucleus</keyword>
<keyword id="KW-1185">Reference proteome</keyword>
<keyword id="KW-0677">Repeat</keyword>
<keyword id="KW-0694">RNA-binding</keyword>
<keyword id="KW-0804">Transcription</keyword>
<keyword id="KW-0805">Transcription regulation</keyword>
<dbReference type="EMBL" id="AL049483">
    <property type="protein sequence ID" value="CAB39665.1"/>
    <property type="molecule type" value="Genomic_DNA"/>
</dbReference>
<dbReference type="EMBL" id="AL161564">
    <property type="protein sequence ID" value="CAB79455.1"/>
    <property type="molecule type" value="Genomic_DNA"/>
</dbReference>
<dbReference type="EMBL" id="CP002687">
    <property type="protein sequence ID" value="AEE85142.1"/>
    <property type="molecule type" value="Genomic_DNA"/>
</dbReference>
<dbReference type="EMBL" id="AY056288">
    <property type="protein sequence ID" value="AAL07137.1"/>
    <property type="molecule type" value="mRNA"/>
</dbReference>
<dbReference type="EMBL" id="AY099659">
    <property type="protein sequence ID" value="AAM20510.1"/>
    <property type="molecule type" value="mRNA"/>
</dbReference>
<dbReference type="EMBL" id="AY114064">
    <property type="protein sequence ID" value="AAM45112.1"/>
    <property type="molecule type" value="mRNA"/>
</dbReference>
<dbReference type="PIR" id="T04255">
    <property type="entry name" value="T04255"/>
</dbReference>
<dbReference type="RefSeq" id="NP_194330.1">
    <property type="nucleotide sequence ID" value="NM_118733.4"/>
</dbReference>
<dbReference type="SMR" id="Q9SZH4"/>
<dbReference type="FunCoup" id="Q9SZH4">
    <property type="interactions" value="1917"/>
</dbReference>
<dbReference type="IntAct" id="Q9SZH4">
    <property type="interactions" value="2"/>
</dbReference>
<dbReference type="STRING" id="3702.Q9SZH4"/>
<dbReference type="GlyGen" id="Q9SZH4">
    <property type="glycosylation" value="2 sites, 1 O-linked glycan (2 sites)"/>
</dbReference>
<dbReference type="iPTMnet" id="Q9SZH4"/>
<dbReference type="PaxDb" id="3702-AT4G26000.1"/>
<dbReference type="ProteomicsDB" id="236294"/>
<dbReference type="EnsemblPlants" id="AT4G26000.1">
    <property type="protein sequence ID" value="AT4G26000.1"/>
    <property type="gene ID" value="AT4G26000"/>
</dbReference>
<dbReference type="GeneID" id="828706"/>
<dbReference type="Gramene" id="AT4G26000.1">
    <property type="protein sequence ID" value="AT4G26000.1"/>
    <property type="gene ID" value="AT4G26000"/>
</dbReference>
<dbReference type="KEGG" id="ath:AT4G26000"/>
<dbReference type="Araport" id="AT4G26000"/>
<dbReference type="TAIR" id="AT4G26000">
    <property type="gene designation" value="PEP"/>
</dbReference>
<dbReference type="eggNOG" id="KOG2190">
    <property type="taxonomic scope" value="Eukaryota"/>
</dbReference>
<dbReference type="HOGENOM" id="CLU_034604_2_0_1"/>
<dbReference type="InParanoid" id="Q9SZH4"/>
<dbReference type="OMA" id="CVFRMIV"/>
<dbReference type="PhylomeDB" id="Q9SZH4"/>
<dbReference type="CD-CODE" id="4299E36E">
    <property type="entry name" value="Nucleolus"/>
</dbReference>
<dbReference type="PRO" id="PR:Q9SZH4"/>
<dbReference type="Proteomes" id="UP000006548">
    <property type="component" value="Chromosome 4"/>
</dbReference>
<dbReference type="ExpressionAtlas" id="Q9SZH4">
    <property type="expression patterns" value="baseline and differential"/>
</dbReference>
<dbReference type="GO" id="GO:0005634">
    <property type="term" value="C:nucleus"/>
    <property type="evidence" value="ECO:0000314"/>
    <property type="project" value="UniProtKB"/>
</dbReference>
<dbReference type="GO" id="GO:0003723">
    <property type="term" value="F:RNA binding"/>
    <property type="evidence" value="ECO:0007669"/>
    <property type="project" value="UniProtKB-KW"/>
</dbReference>
<dbReference type="GO" id="GO:0048467">
    <property type="term" value="P:gynoecium development"/>
    <property type="evidence" value="ECO:0000315"/>
    <property type="project" value="TAIR"/>
</dbReference>
<dbReference type="GO" id="GO:0009299">
    <property type="term" value="P:mRNA transcription"/>
    <property type="evidence" value="ECO:0000315"/>
    <property type="project" value="UniProtKB"/>
</dbReference>
<dbReference type="GO" id="GO:0048579">
    <property type="term" value="P:negative regulation of long-day photoperiodism, flowering"/>
    <property type="evidence" value="ECO:0000315"/>
    <property type="project" value="UniProtKB"/>
</dbReference>
<dbReference type="GO" id="GO:0048577">
    <property type="term" value="P:negative regulation of short-day photoperiodism, flowering"/>
    <property type="evidence" value="ECO:0000315"/>
    <property type="project" value="UniProtKB"/>
</dbReference>
<dbReference type="GO" id="GO:0006396">
    <property type="term" value="P:RNA processing"/>
    <property type="evidence" value="ECO:0000315"/>
    <property type="project" value="UniProtKB"/>
</dbReference>
<dbReference type="GO" id="GO:0048367">
    <property type="term" value="P:shoot system development"/>
    <property type="evidence" value="ECO:0000315"/>
    <property type="project" value="TAIR"/>
</dbReference>
<dbReference type="CDD" id="cd22461">
    <property type="entry name" value="KH-I_PEPPER_like_rpt3"/>
    <property type="match status" value="1"/>
</dbReference>
<dbReference type="CDD" id="cd22459">
    <property type="entry name" value="KH-I_PEPPER_rpt1_like"/>
    <property type="match status" value="1"/>
</dbReference>
<dbReference type="CDD" id="cd22460">
    <property type="entry name" value="KH-I_PEPPER_rpt2_like"/>
    <property type="match status" value="1"/>
</dbReference>
<dbReference type="Gene3D" id="3.30.310.210">
    <property type="match status" value="1"/>
</dbReference>
<dbReference type="Gene3D" id="3.30.1370.10">
    <property type="entry name" value="K Homology domain, type 1"/>
    <property type="match status" value="1"/>
</dbReference>
<dbReference type="InterPro" id="IPR004087">
    <property type="entry name" value="KH_dom"/>
</dbReference>
<dbReference type="InterPro" id="IPR004088">
    <property type="entry name" value="KH_dom_type_1"/>
</dbReference>
<dbReference type="InterPro" id="IPR036612">
    <property type="entry name" value="KH_dom_type_1_sf"/>
</dbReference>
<dbReference type="PANTHER" id="PTHR10288">
    <property type="entry name" value="KH DOMAIN CONTAINING RNA BINDING PROTEIN"/>
    <property type="match status" value="1"/>
</dbReference>
<dbReference type="Pfam" id="PF00013">
    <property type="entry name" value="KH_1"/>
    <property type="match status" value="3"/>
</dbReference>
<dbReference type="SMART" id="SM00322">
    <property type="entry name" value="KH"/>
    <property type="match status" value="3"/>
</dbReference>
<dbReference type="SUPFAM" id="SSF54791">
    <property type="entry name" value="Eukaryotic type KH-domain (KH-domain type I)"/>
    <property type="match status" value="3"/>
</dbReference>
<dbReference type="PROSITE" id="PS50084">
    <property type="entry name" value="KH_TYPE_1"/>
    <property type="match status" value="3"/>
</dbReference>
<organism evidence="9">
    <name type="scientific">Arabidopsis thaliana</name>
    <name type="common">Mouse-ear cress</name>
    <dbReference type="NCBI Taxonomy" id="3702"/>
    <lineage>
        <taxon>Eukaryota</taxon>
        <taxon>Viridiplantae</taxon>
        <taxon>Streptophyta</taxon>
        <taxon>Embryophyta</taxon>
        <taxon>Tracheophyta</taxon>
        <taxon>Spermatophyta</taxon>
        <taxon>Magnoliopsida</taxon>
        <taxon>eudicotyledons</taxon>
        <taxon>Gunneridae</taxon>
        <taxon>Pentapetalae</taxon>
        <taxon>rosids</taxon>
        <taxon>malvids</taxon>
        <taxon>Brassicales</taxon>
        <taxon>Brassicaceae</taxon>
        <taxon>Camelineae</taxon>
        <taxon>Arabidopsis</taxon>
    </lineage>
</organism>
<evidence type="ECO:0000255" key="1">
    <source>
        <dbReference type="PROSITE-ProRule" id="PRU00117"/>
    </source>
</evidence>
<evidence type="ECO:0000256" key="2">
    <source>
        <dbReference type="SAM" id="MobiDB-lite"/>
    </source>
</evidence>
<evidence type="ECO:0000269" key="3">
    <source>
    </source>
</evidence>
<evidence type="ECO:0000269" key="4">
    <source>
    </source>
</evidence>
<evidence type="ECO:0000269" key="5">
    <source>
    </source>
</evidence>
<evidence type="ECO:0000303" key="6">
    <source>
    </source>
</evidence>
<evidence type="ECO:0000312" key="7">
    <source>
        <dbReference type="Araport" id="AT4G26000"/>
    </source>
</evidence>
<evidence type="ECO:0000312" key="8">
    <source>
        <dbReference type="EMBL" id="CAB39665.1"/>
    </source>
</evidence>
<evidence type="ECO:0000312" key="9">
    <source>
        <dbReference type="Proteomes" id="UP000006548"/>
    </source>
</evidence>
<comment type="function">
    <text evidence="3 4">Regulates vegetative and gynoecium development (PubMed:16356489). In concert with HUA2, antagonizes FLK by positively regulating FLC probably at transcriptional and post-transcriptional levels, and thus acts as a negative regulator of flowering (PubMed:19576878).</text>
</comment>
<comment type="subunit">
    <text evidence="5">Interacts with HUA1 and HEN4.</text>
</comment>
<comment type="subcellular location">
    <subcellularLocation>
        <location evidence="4">Nucleus</location>
    </subcellularLocation>
</comment>
<comment type="tissue specificity">
    <text evidence="3">Detected in roots, shoots, leaves, flowers and fruits.</text>
</comment>
<comment type="developmental stage">
    <text evidence="3">In seedlings, expressed in leaf primordia and young developing leaves. Progressively circumscribed to the adaxial side of developing leaves to become restricted to the veins in fully expanded leaves. In roots, confined to the vasculature. Present in floral buds and young developing flower organs. Accumulates in perianth organs and stamens before being restricted to the vascular system in later postanthesis stages. Strong expression throughout the young pistil. Disappears from the apical stigma during postanthesis fruit maturation. Detected in the style until later stages in fruit development, mainly in style vasculature, but progressively fades away from most of the ovary region.</text>
</comment>
<comment type="disruption phenotype">
    <text evidence="3 4">Subtle morphological alterations in pep-2 and pep-4 such as leaf alterations, phyllotactic errors and sporadic presence of small fruits with multiple valves. Occasional asymmetry in valve growth and unfused carpels (PubMed:16356489). Rescues the flk mutant late-flowering phenotype with a concomitant decrease in FLC RNA levels (PubMed:19576878).</text>
</comment>
<protein>
    <recommendedName>
        <fullName evidence="6">RNA-binding KH domain-containing protein PEPPER</fullName>
    </recommendedName>
</protein>
<sequence>MAAVADSVENNGSINLPENENLIPAGFSAAALLDENSGAFPELNQPDSLAAAETTFPDTNDSAEERWPGWPGDCVFRMIVPVTKVGAIIGRKGDFIKKMCEETRARIKVLDGPVNTPDRIVLISGKEEPEAYMSPAMDAVLRVFRRVSGLPDNDDDDVQNAGSVFSSVRLLVASTQAINLIGKQGSLIKSIVENSGASVRILSEEETPFYAAQDERIVDLQGEALKILKALEAIVGHLRRFLVDHTVVPLFEKQYLARVSQTRQEEPLAESKSSLHTISSNLMEPDFSLLARREPLFLERDSRVDSRVQPSGVSIYSQDPVLSARHSPGLARVSSAFVTQVSQTMQIPFSYAEDIIGVEGANIAYIRRRSGATITIKESPHPDQITVEIKGTTSQVQTAEQLIQEFIINHKEPVSVSGGYARIDSGYVPAYPPQLSNRQEPLPSTYMGTEPVQYRPTAYSQLGGPSTYTPTLTGQTYGSEYRPASDVGGYSSYNL</sequence>
<proteinExistence type="evidence at protein level"/>